<organism>
    <name type="scientific">Rattus norvegicus</name>
    <name type="common">Rat</name>
    <dbReference type="NCBI Taxonomy" id="10116"/>
    <lineage>
        <taxon>Eukaryota</taxon>
        <taxon>Metazoa</taxon>
        <taxon>Chordata</taxon>
        <taxon>Craniata</taxon>
        <taxon>Vertebrata</taxon>
        <taxon>Euteleostomi</taxon>
        <taxon>Mammalia</taxon>
        <taxon>Eutheria</taxon>
        <taxon>Euarchontoglires</taxon>
        <taxon>Glires</taxon>
        <taxon>Rodentia</taxon>
        <taxon>Myomorpha</taxon>
        <taxon>Muroidea</taxon>
        <taxon>Muridae</taxon>
        <taxon>Murinae</taxon>
        <taxon>Rattus</taxon>
    </lineage>
</organism>
<sequence>MKDCEYQQISPGAAPPPASPGVHRPGPAAPPGPSPGPAPGAPRWSVSGSGSGSGSGSGSLGRRPRRKWEVFPGRNRFYCGGRLMLAGHGGVFALTLLLILSTTILFFIFDCPYLARTLTLAIPIIAAILFFFVMSCLLQTSFTDPGILPRATICEAAALEKQIDNTGSSTYRPPPRTREVMINGQMVKLKYCFTCKMFRPPRTSHCSVCDNCVERFDHHCPWVGNCVGRRNYRFFYAFILSLSFLTAFIFACVVTHLTLLSQGSNFLSALNKTPAGVLELVICFFSIWSILGLSGFHTYLVASNLTTNEDIKGSWSSKRGGEASVNPYSHKSIITNCCAVLCGPLPPSLIDRRGFVQSDTVLPSPIRSDEPACGAKPDASMVGGHP</sequence>
<accession>Q2TGJ1</accession>
<protein>
    <recommendedName>
        <fullName evidence="6">Palmitoyltransferase ZDHHC18</fullName>
        <ecNumber evidence="2">2.3.1.225</ecNumber>
    </recommendedName>
    <alternativeName>
        <fullName evidence="7">Zinc finger DHHC domain-containing protein 18</fullName>
    </alternativeName>
</protein>
<feature type="chain" id="PRO_0000269198" description="Palmitoyltransferase ZDHHC18">
    <location>
        <begin position="1"/>
        <end position="386"/>
    </location>
</feature>
<feature type="topological domain" description="Cytoplasmic" evidence="6">
    <location>
        <begin position="1"/>
        <end position="88"/>
    </location>
</feature>
<feature type="transmembrane region" description="Helical" evidence="3">
    <location>
        <begin position="89"/>
        <end position="109"/>
    </location>
</feature>
<feature type="topological domain" description="Lumenal" evidence="6">
    <location>
        <begin position="110"/>
        <end position="117"/>
    </location>
</feature>
<feature type="transmembrane region" description="Helical" evidence="3">
    <location>
        <begin position="118"/>
        <end position="138"/>
    </location>
</feature>
<feature type="topological domain" description="Cytoplasmic" evidence="6">
    <location>
        <begin position="139"/>
        <end position="233"/>
    </location>
</feature>
<feature type="transmembrane region" description="Helical" evidence="3">
    <location>
        <begin position="234"/>
        <end position="254"/>
    </location>
</feature>
<feature type="topological domain" description="Lumenal" evidence="6">
    <location>
        <begin position="255"/>
        <end position="275"/>
    </location>
</feature>
<feature type="transmembrane region" description="Helical" evidence="3">
    <location>
        <begin position="276"/>
        <end position="296"/>
    </location>
</feature>
<feature type="topological domain" description="Cytoplasmic" evidence="6">
    <location>
        <begin position="297"/>
        <end position="386"/>
    </location>
</feature>
<feature type="domain" description="DHHC" evidence="4">
    <location>
        <begin position="190"/>
        <end position="240"/>
    </location>
</feature>
<feature type="region of interest" description="Disordered" evidence="5">
    <location>
        <begin position="1"/>
        <end position="65"/>
    </location>
</feature>
<feature type="region of interest" description="Disordered" evidence="5">
    <location>
        <begin position="362"/>
        <end position="386"/>
    </location>
</feature>
<feature type="compositionally biased region" description="Pro residues" evidence="5">
    <location>
        <begin position="27"/>
        <end position="40"/>
    </location>
</feature>
<feature type="compositionally biased region" description="Gly residues" evidence="5">
    <location>
        <begin position="49"/>
        <end position="59"/>
    </location>
</feature>
<feature type="active site" description="S-palmitoyl cysteine intermediate" evidence="4">
    <location>
        <position position="220"/>
    </location>
</feature>
<feature type="modified residue" description="Phosphoserine" evidence="2">
    <location>
        <position position="19"/>
    </location>
</feature>
<proteinExistence type="evidence at transcript level"/>
<gene>
    <name evidence="7" type="primary">Zdhhc18</name>
</gene>
<evidence type="ECO:0000250" key="1">
    <source>
        <dbReference type="UniProtKB" id="Q8IUH5"/>
    </source>
</evidence>
<evidence type="ECO:0000250" key="2">
    <source>
        <dbReference type="UniProtKB" id="Q9NUE0"/>
    </source>
</evidence>
<evidence type="ECO:0000255" key="3"/>
<evidence type="ECO:0000255" key="4">
    <source>
        <dbReference type="PROSITE-ProRule" id="PRU00067"/>
    </source>
</evidence>
<evidence type="ECO:0000256" key="5">
    <source>
        <dbReference type="SAM" id="MobiDB-lite"/>
    </source>
</evidence>
<evidence type="ECO:0000305" key="6"/>
<evidence type="ECO:0000312" key="7">
    <source>
        <dbReference type="RGD" id="1309334"/>
    </source>
</evidence>
<keyword id="KW-0012">Acyltransferase</keyword>
<keyword id="KW-0333">Golgi apparatus</keyword>
<keyword id="KW-0391">Immunity</keyword>
<keyword id="KW-0399">Innate immunity</keyword>
<keyword id="KW-0449">Lipoprotein</keyword>
<keyword id="KW-0472">Membrane</keyword>
<keyword id="KW-0564">Palmitate</keyword>
<keyword id="KW-0597">Phosphoprotein</keyword>
<keyword id="KW-1185">Reference proteome</keyword>
<keyword id="KW-0808">Transferase</keyword>
<keyword id="KW-0812">Transmembrane</keyword>
<keyword id="KW-1133">Transmembrane helix</keyword>
<comment type="function">
    <text evidence="2">Palmitoyltransferase that catalyzes the addition of palmitate onto various protein substrates, such as CGAS, HRAS and LCK. Acts as a negative regulator of the cGAS-STING pathway be mediating palmitoylation and inactivation of CGAS. May also have a palmitoyltransferase activity toward the beta-2 adrenergic receptor/ADRB2 and therefore regulate G protein-coupled receptor signaling.</text>
</comment>
<comment type="catalytic activity">
    <reaction evidence="2">
        <text>L-cysteinyl-[protein] + hexadecanoyl-CoA = S-hexadecanoyl-L-cysteinyl-[protein] + CoA</text>
        <dbReference type="Rhea" id="RHEA:36683"/>
        <dbReference type="Rhea" id="RHEA-COMP:10131"/>
        <dbReference type="Rhea" id="RHEA-COMP:11032"/>
        <dbReference type="ChEBI" id="CHEBI:29950"/>
        <dbReference type="ChEBI" id="CHEBI:57287"/>
        <dbReference type="ChEBI" id="CHEBI:57379"/>
        <dbReference type="ChEBI" id="CHEBI:74151"/>
        <dbReference type="EC" id="2.3.1.225"/>
    </reaction>
    <physiologicalReaction direction="left-to-right" evidence="2">
        <dbReference type="Rhea" id="RHEA:36684"/>
    </physiologicalReaction>
</comment>
<comment type="subcellular location">
    <subcellularLocation>
        <location evidence="2">Golgi apparatus membrane</location>
        <topology evidence="3">Multi-pass membrane protein</topology>
    </subcellularLocation>
</comment>
<comment type="domain">
    <text evidence="1">The DHHC domain is required for palmitoyltransferase activity.</text>
</comment>
<comment type="similarity">
    <text evidence="6">Belongs to the DHHC palmitoyltransferase family. ERF2/ZDHHC9 subfamily.</text>
</comment>
<dbReference type="EC" id="2.3.1.225" evidence="2"/>
<dbReference type="EMBL" id="AY886534">
    <property type="protein sequence ID" value="AAX73396.1"/>
    <property type="molecule type" value="mRNA"/>
</dbReference>
<dbReference type="RefSeq" id="NP_001034428.1">
    <property type="nucleotide sequence ID" value="NM_001039339.1"/>
</dbReference>
<dbReference type="SMR" id="Q2TGJ1"/>
<dbReference type="FunCoup" id="Q2TGJ1">
    <property type="interactions" value="451"/>
</dbReference>
<dbReference type="STRING" id="10116.ENSRNOP00000073628"/>
<dbReference type="GlyGen" id="Q2TGJ1">
    <property type="glycosylation" value="1 site"/>
</dbReference>
<dbReference type="PhosphoSitePlus" id="Q2TGJ1"/>
<dbReference type="PaxDb" id="10116-ENSRNOP00000009235"/>
<dbReference type="GeneID" id="362613"/>
<dbReference type="KEGG" id="rno:362613"/>
<dbReference type="UCSC" id="RGD:1309334">
    <property type="organism name" value="rat"/>
</dbReference>
<dbReference type="AGR" id="RGD:1309334"/>
<dbReference type="CTD" id="84243"/>
<dbReference type="RGD" id="1309334">
    <property type="gene designation" value="Zdhhc18"/>
</dbReference>
<dbReference type="eggNOG" id="KOG1311">
    <property type="taxonomic scope" value="Eukaryota"/>
</dbReference>
<dbReference type="InParanoid" id="Q2TGJ1"/>
<dbReference type="PhylomeDB" id="Q2TGJ1"/>
<dbReference type="PRO" id="PR:Q2TGJ1"/>
<dbReference type="Proteomes" id="UP000002494">
    <property type="component" value="Unplaced"/>
</dbReference>
<dbReference type="GO" id="GO:0005783">
    <property type="term" value="C:endoplasmic reticulum"/>
    <property type="evidence" value="ECO:0000318"/>
    <property type="project" value="GO_Central"/>
</dbReference>
<dbReference type="GO" id="GO:0005794">
    <property type="term" value="C:Golgi apparatus"/>
    <property type="evidence" value="ECO:0000250"/>
    <property type="project" value="UniProtKB"/>
</dbReference>
<dbReference type="GO" id="GO:0000139">
    <property type="term" value="C:Golgi membrane"/>
    <property type="evidence" value="ECO:0007669"/>
    <property type="project" value="UniProtKB-SubCell"/>
</dbReference>
<dbReference type="GO" id="GO:0016409">
    <property type="term" value="F:palmitoyltransferase activity"/>
    <property type="evidence" value="ECO:0000266"/>
    <property type="project" value="RGD"/>
</dbReference>
<dbReference type="GO" id="GO:0019706">
    <property type="term" value="F:protein-cysteine S-palmitoyltransferase activity"/>
    <property type="evidence" value="ECO:0000250"/>
    <property type="project" value="UniProtKB"/>
</dbReference>
<dbReference type="GO" id="GO:0045087">
    <property type="term" value="P:innate immune response"/>
    <property type="evidence" value="ECO:0007669"/>
    <property type="project" value="UniProtKB-KW"/>
</dbReference>
<dbReference type="GO" id="GO:0160049">
    <property type="term" value="P:negative regulation of cGAS/STING signaling pathway"/>
    <property type="evidence" value="ECO:0000266"/>
    <property type="project" value="RGD"/>
</dbReference>
<dbReference type="GO" id="GO:0045824">
    <property type="term" value="P:negative regulation of innate immune response"/>
    <property type="evidence" value="ECO:0000250"/>
    <property type="project" value="UniProtKB"/>
</dbReference>
<dbReference type="GO" id="GO:0018230">
    <property type="term" value="P:peptidyl-L-cysteine S-palmitoylation"/>
    <property type="evidence" value="ECO:0000250"/>
    <property type="project" value="UniProtKB"/>
</dbReference>
<dbReference type="GO" id="GO:0008104">
    <property type="term" value="P:protein localization"/>
    <property type="evidence" value="ECO:0000266"/>
    <property type="project" value="RGD"/>
</dbReference>
<dbReference type="GO" id="GO:0006612">
    <property type="term" value="P:protein targeting to membrane"/>
    <property type="evidence" value="ECO:0000318"/>
    <property type="project" value="GO_Central"/>
</dbReference>
<dbReference type="InterPro" id="IPR001594">
    <property type="entry name" value="Palmitoyltrfase_DHHC"/>
</dbReference>
<dbReference type="InterPro" id="IPR039859">
    <property type="entry name" value="PFA4/ZDH16/20/ERF2-like"/>
</dbReference>
<dbReference type="PANTHER" id="PTHR22883:SF257">
    <property type="entry name" value="PALMITOYLTRANSFERASE ZDHHC18"/>
    <property type="match status" value="1"/>
</dbReference>
<dbReference type="PANTHER" id="PTHR22883">
    <property type="entry name" value="ZINC FINGER DHHC DOMAIN CONTAINING PROTEIN"/>
    <property type="match status" value="1"/>
</dbReference>
<dbReference type="Pfam" id="PF01529">
    <property type="entry name" value="DHHC"/>
    <property type="match status" value="1"/>
</dbReference>
<dbReference type="PROSITE" id="PS50216">
    <property type="entry name" value="DHHC"/>
    <property type="match status" value="1"/>
</dbReference>
<name>ZDH18_RAT</name>
<reference key="1">
    <citation type="submission" date="2005-01" db="EMBL/GenBank/DDBJ databases">
        <title>A superfamily of membrane-associated DHHC type zinc finger proteins.</title>
        <authorList>
            <person name="Huang C.-H."/>
            <person name="Chen Y."/>
            <person name="Ye T."/>
        </authorList>
    </citation>
    <scope>NUCLEOTIDE SEQUENCE [MRNA]</scope>
</reference>